<feature type="chain" id="PRO_0000378276" description="Alpha-ketoglutarate-dependent dioxygenase AlkB homolog">
    <location>
        <begin position="1"/>
        <end position="220"/>
    </location>
</feature>
<feature type="domain" description="Fe2OG dioxygenase" evidence="2">
    <location>
        <begin position="117"/>
        <end position="218"/>
    </location>
</feature>
<feature type="binding site" evidence="1">
    <location>
        <position position="77"/>
    </location>
    <ligand>
        <name>substrate</name>
    </ligand>
</feature>
<feature type="binding site" evidence="1">
    <location>
        <begin position="84"/>
        <end position="86"/>
    </location>
    <ligand>
        <name>substrate</name>
    </ligand>
</feature>
<feature type="binding site" evidence="1">
    <location>
        <begin position="124"/>
        <end position="126"/>
    </location>
    <ligand>
        <name>2-oxoglutarate</name>
        <dbReference type="ChEBI" id="CHEBI:16810"/>
    </ligand>
</feature>
<feature type="binding site" evidence="2">
    <location>
        <position position="135"/>
    </location>
    <ligand>
        <name>Fe cation</name>
        <dbReference type="ChEBI" id="CHEBI:24875"/>
        <note>catalytic</note>
    </ligand>
</feature>
<feature type="binding site" evidence="2">
    <location>
        <position position="137"/>
    </location>
    <ligand>
        <name>Fe cation</name>
        <dbReference type="ChEBI" id="CHEBI:24875"/>
        <note>catalytic</note>
    </ligand>
</feature>
<feature type="binding site" evidence="1">
    <location>
        <position position="139"/>
    </location>
    <ligand>
        <name>substrate</name>
    </ligand>
</feature>
<feature type="binding site" evidence="1">
    <location>
        <position position="165"/>
    </location>
    <ligand>
        <name>substrate</name>
    </ligand>
</feature>
<feature type="binding site" evidence="2">
    <location>
        <position position="191"/>
    </location>
    <ligand>
        <name>Fe cation</name>
        <dbReference type="ChEBI" id="CHEBI:24875"/>
        <note>catalytic</note>
    </ligand>
</feature>
<feature type="binding site" evidence="1">
    <location>
        <begin position="209"/>
        <end position="215"/>
    </location>
    <ligand>
        <name>2-oxoglutarate</name>
        <dbReference type="ChEBI" id="CHEBI:16810"/>
    </ligand>
</feature>
<feature type="sequence conflict" description="In Ref. 1; AAC45302." evidence="3" ref="1">
    <original>RD</original>
    <variation>AT</variation>
    <location>
        <begin position="127"/>
        <end position="128"/>
    </location>
</feature>
<feature type="sequence conflict" description="In Ref. 1; AAC45302." evidence="3" ref="1">
    <original>V</original>
    <variation>L</variation>
    <location>
        <position position="147"/>
    </location>
</feature>
<organism>
    <name type="scientific">Caulobacter vibrioides (strain NA1000 / CB15N)</name>
    <name type="common">Caulobacter crescentus</name>
    <dbReference type="NCBI Taxonomy" id="565050"/>
    <lineage>
        <taxon>Bacteria</taxon>
        <taxon>Pseudomonadati</taxon>
        <taxon>Pseudomonadota</taxon>
        <taxon>Alphaproteobacteria</taxon>
        <taxon>Caulobacterales</taxon>
        <taxon>Caulobacteraceae</taxon>
        <taxon>Caulobacter</taxon>
    </lineage>
</organism>
<comment type="function">
    <text evidence="1">Dioxygenase that repairs alkylated DNA and RNA containing 3-methylcytosine or 1-methyladenine by oxidative demethylation. Has highest activity towards 3-methylcytosine. Has lower activity towards alkylated DNA containing ethenoadenine, and no detectable activity towards 1-methylguanine or 3-methylthymine. Accepts double-stranded and single-stranded substrates. Requires molecular oxygen, alpha-ketoglutarate and iron. Provides extensive resistance to alkylating agents such as MMS and DMS (SN2 agents), but not to MMNG and MNU (SN1 agents) (By similarity).</text>
</comment>
<comment type="catalytic activity">
    <reaction>
        <text>a methylated nucleobase within DNA + 2-oxoglutarate + O2 = a nucleobase within DNA + formaldehyde + succinate + CO2</text>
        <dbReference type="Rhea" id="RHEA:30299"/>
        <dbReference type="Rhea" id="RHEA-COMP:12192"/>
        <dbReference type="Rhea" id="RHEA-COMP:12193"/>
        <dbReference type="ChEBI" id="CHEBI:15379"/>
        <dbReference type="ChEBI" id="CHEBI:16526"/>
        <dbReference type="ChEBI" id="CHEBI:16810"/>
        <dbReference type="ChEBI" id="CHEBI:16842"/>
        <dbReference type="ChEBI" id="CHEBI:30031"/>
        <dbReference type="ChEBI" id="CHEBI:32875"/>
        <dbReference type="ChEBI" id="CHEBI:64428"/>
        <dbReference type="EC" id="1.14.11.33"/>
    </reaction>
</comment>
<comment type="cofactor">
    <cofactor evidence="2">
        <name>Fe(2+)</name>
        <dbReference type="ChEBI" id="CHEBI:29033"/>
    </cofactor>
    <text evidence="2">Binds 1 Fe(2+) ion per subunit.</text>
</comment>
<comment type="similarity">
    <text evidence="3">Belongs to the alkB family.</text>
</comment>
<comment type="sequence caution" evidence="3">
    <conflict type="frameshift">
        <sequence resource="EMBL-CDS" id="AAC45302"/>
    </conflict>
</comment>
<comment type="sequence caution" evidence="3">
    <conflict type="erroneous initiation">
        <sequence resource="EMBL-CDS" id="ACL93476"/>
    </conflict>
</comment>
<gene>
    <name type="primary">alkB</name>
    <name type="ordered locus">CCNA_00009</name>
</gene>
<reference key="1">
    <citation type="journal article" date="1997" name="J. Bacteriol.">
        <title>An alkB gene homolog is differentially transcribed during the Caulobacter crescentus cell cycle.</title>
        <authorList>
            <person name="Colombi D."/>
            <person name="Gomes S.L."/>
        </authorList>
    </citation>
    <scope>NUCLEOTIDE SEQUENCE [GENOMIC DNA]</scope>
</reference>
<reference key="2">
    <citation type="journal article" date="2010" name="J. Bacteriol.">
        <title>The genetic basis of laboratory adaptation in Caulobacter crescentus.</title>
        <authorList>
            <person name="Marks M.E."/>
            <person name="Castro-Rojas C.M."/>
            <person name="Teiling C."/>
            <person name="Du L."/>
            <person name="Kapatral V."/>
            <person name="Walunas T.L."/>
            <person name="Crosson S."/>
        </authorList>
    </citation>
    <scope>NUCLEOTIDE SEQUENCE [LARGE SCALE GENOMIC DNA]</scope>
    <source>
        <strain>NA1000 / CB15N</strain>
    </source>
</reference>
<evidence type="ECO:0000250" key="1"/>
<evidence type="ECO:0000255" key="2">
    <source>
        <dbReference type="PROSITE-ProRule" id="PRU00805"/>
    </source>
</evidence>
<evidence type="ECO:0000305" key="3"/>
<accession>B8GWW6</accession>
<accession>O05725</accession>
<name>ALKB_CAUVN</name>
<sequence length="220" mass="23764">MAVVRRAVAARGLQMIAKPLTVVPGFDVWPGLLDISAQRALVEAVLAGAEQAPFSNYRTAYGKPMSVAMTALGSLGWTSDARGYRYVDRHPETGRPWPDMPPALLDLWTVLGDPETPPDSCLVNLYRDGARMGLHQDRDEADPRFPVLSISLGDTAVFRIGGVNRKDPTRSLRLASGDVCRLLGPARLAFHGVDRILPGSSSLVPGGGRINLTLRRARTA</sequence>
<proteinExistence type="inferred from homology"/>
<keyword id="KW-0223">Dioxygenase</keyword>
<keyword id="KW-0227">DNA damage</keyword>
<keyword id="KW-0234">DNA repair</keyword>
<keyword id="KW-0408">Iron</keyword>
<keyword id="KW-0479">Metal-binding</keyword>
<keyword id="KW-0560">Oxidoreductase</keyword>
<keyword id="KW-1185">Reference proteome</keyword>
<dbReference type="EC" id="1.14.11.33"/>
<dbReference type="EMBL" id="U73681">
    <property type="protein sequence ID" value="AAC45302.1"/>
    <property type="status" value="ALT_FRAME"/>
    <property type="molecule type" value="Genomic_DNA"/>
</dbReference>
<dbReference type="EMBL" id="CP001340">
    <property type="protein sequence ID" value="ACL93476.1"/>
    <property type="status" value="ALT_INIT"/>
    <property type="molecule type" value="Genomic_DNA"/>
</dbReference>
<dbReference type="RefSeq" id="YP_002515384.1">
    <property type="nucleotide sequence ID" value="NC_011916.1"/>
</dbReference>
<dbReference type="SMR" id="B8GWW6"/>
<dbReference type="GeneID" id="7333150"/>
<dbReference type="KEGG" id="ccs:CCNA_00009"/>
<dbReference type="PATRIC" id="fig|565050.3.peg.9"/>
<dbReference type="HOGENOM" id="CLU_039677_1_0_5"/>
<dbReference type="OrthoDB" id="9796932at2"/>
<dbReference type="PhylomeDB" id="B8GWW6"/>
<dbReference type="Proteomes" id="UP000001364">
    <property type="component" value="Chromosome"/>
</dbReference>
<dbReference type="GO" id="GO:0005737">
    <property type="term" value="C:cytoplasm"/>
    <property type="evidence" value="ECO:0007669"/>
    <property type="project" value="TreeGrafter"/>
</dbReference>
<dbReference type="GO" id="GO:0035516">
    <property type="term" value="F:broad specificity oxidative DNA demethylase activity"/>
    <property type="evidence" value="ECO:0007669"/>
    <property type="project" value="UniProtKB-EC"/>
</dbReference>
<dbReference type="GO" id="GO:0008198">
    <property type="term" value="F:ferrous iron binding"/>
    <property type="evidence" value="ECO:0007669"/>
    <property type="project" value="TreeGrafter"/>
</dbReference>
<dbReference type="GO" id="GO:0035515">
    <property type="term" value="F:oxidative RNA demethylase activity"/>
    <property type="evidence" value="ECO:0007669"/>
    <property type="project" value="TreeGrafter"/>
</dbReference>
<dbReference type="GO" id="GO:0006281">
    <property type="term" value="P:DNA repair"/>
    <property type="evidence" value="ECO:0007669"/>
    <property type="project" value="UniProtKB-KW"/>
</dbReference>
<dbReference type="GO" id="GO:0035513">
    <property type="term" value="P:oxidative RNA demethylation"/>
    <property type="evidence" value="ECO:0007669"/>
    <property type="project" value="TreeGrafter"/>
</dbReference>
<dbReference type="Gene3D" id="2.60.120.590">
    <property type="entry name" value="Alpha-ketoglutarate-dependent dioxygenase AlkB-like"/>
    <property type="match status" value="1"/>
</dbReference>
<dbReference type="InterPro" id="IPR004574">
    <property type="entry name" value="Alkb"/>
</dbReference>
<dbReference type="InterPro" id="IPR027450">
    <property type="entry name" value="AlkB-like"/>
</dbReference>
<dbReference type="InterPro" id="IPR037151">
    <property type="entry name" value="AlkB-like_sf"/>
</dbReference>
<dbReference type="InterPro" id="IPR005123">
    <property type="entry name" value="Oxoglu/Fe-dep_dioxygenase_dom"/>
</dbReference>
<dbReference type="PANTHER" id="PTHR16557">
    <property type="entry name" value="ALKYLATED DNA REPAIR PROTEIN ALKB-RELATED"/>
    <property type="match status" value="1"/>
</dbReference>
<dbReference type="PANTHER" id="PTHR16557:SF2">
    <property type="entry name" value="NUCLEIC ACID DIOXYGENASE ALKBH1"/>
    <property type="match status" value="1"/>
</dbReference>
<dbReference type="Pfam" id="PF13532">
    <property type="entry name" value="2OG-FeII_Oxy_2"/>
    <property type="match status" value="1"/>
</dbReference>
<dbReference type="SUPFAM" id="SSF51197">
    <property type="entry name" value="Clavaminate synthase-like"/>
    <property type="match status" value="1"/>
</dbReference>
<dbReference type="PROSITE" id="PS51471">
    <property type="entry name" value="FE2OG_OXY"/>
    <property type="match status" value="1"/>
</dbReference>
<protein>
    <recommendedName>
        <fullName>Alpha-ketoglutarate-dependent dioxygenase AlkB homolog</fullName>
        <ecNumber>1.14.11.33</ecNumber>
    </recommendedName>
    <alternativeName>
        <fullName>DNA oxidative demethylase AlkB</fullName>
    </alternativeName>
</protein>